<dbReference type="EC" id="2.7.4.21"/>
<dbReference type="EMBL" id="AF177144">
    <property type="protein sequence ID" value="AAF15056.1"/>
    <property type="molecule type" value="mRNA"/>
</dbReference>
<dbReference type="EMBL" id="BC059006">
    <property type="protein sequence ID" value="AAH59006.1"/>
    <property type="molecule type" value="mRNA"/>
</dbReference>
<dbReference type="CCDS" id="CCDS23514.1"/>
<dbReference type="RefSeq" id="NP_038813.2">
    <property type="nucleotide sequence ID" value="NM_013785.2"/>
</dbReference>
<dbReference type="SMR" id="Q6PD10"/>
<dbReference type="BioGRID" id="205206">
    <property type="interactions" value="3"/>
</dbReference>
<dbReference type="FunCoup" id="Q6PD10">
    <property type="interactions" value="3941"/>
</dbReference>
<dbReference type="STRING" id="10090.ENSMUSP00000035214"/>
<dbReference type="GlyGen" id="Q6PD10">
    <property type="glycosylation" value="1 site, 1 N-linked glycan (1 site)"/>
</dbReference>
<dbReference type="iPTMnet" id="Q6PD10"/>
<dbReference type="PhosphoSitePlus" id="Q6PD10"/>
<dbReference type="SwissPalm" id="Q6PD10"/>
<dbReference type="PaxDb" id="10090-ENSMUSP00000035214"/>
<dbReference type="ProteomicsDB" id="269495"/>
<dbReference type="Pumba" id="Q6PD10"/>
<dbReference type="Antibodypedia" id="30640">
    <property type="antibodies" value="239 antibodies from 28 providers"/>
</dbReference>
<dbReference type="DNASU" id="27399"/>
<dbReference type="Ensembl" id="ENSMUST00000035214.11">
    <property type="protein sequence ID" value="ENSMUSP00000035214.5"/>
    <property type="gene ID" value="ENSMUSG00000032594.12"/>
</dbReference>
<dbReference type="GeneID" id="27399"/>
<dbReference type="KEGG" id="mmu:27399"/>
<dbReference type="UCSC" id="uc009roc.1">
    <property type="organism name" value="mouse"/>
</dbReference>
<dbReference type="AGR" id="MGI:1351633"/>
<dbReference type="CTD" id="9807"/>
<dbReference type="MGI" id="MGI:1351633">
    <property type="gene designation" value="Ip6k1"/>
</dbReference>
<dbReference type="VEuPathDB" id="HostDB:ENSMUSG00000032594"/>
<dbReference type="eggNOG" id="KOG1620">
    <property type="taxonomic scope" value="Eukaryota"/>
</dbReference>
<dbReference type="GeneTree" id="ENSGT00940000157802"/>
<dbReference type="HOGENOM" id="CLU_014862_0_0_1"/>
<dbReference type="InParanoid" id="Q6PD10"/>
<dbReference type="OMA" id="CRAEMFL"/>
<dbReference type="OrthoDB" id="2573163at2759"/>
<dbReference type="PhylomeDB" id="Q6PD10"/>
<dbReference type="TreeFam" id="TF314066"/>
<dbReference type="BRENDA" id="2.7.1.158">
    <property type="organism ID" value="3474"/>
</dbReference>
<dbReference type="BRENDA" id="2.7.4.21">
    <property type="organism ID" value="3474"/>
</dbReference>
<dbReference type="Reactome" id="R-MMU-1855167">
    <property type="pathway name" value="Synthesis of pyrophosphates in the cytosol"/>
</dbReference>
<dbReference type="Reactome" id="R-MMU-1855191">
    <property type="pathway name" value="Synthesis of IPs in the nucleus"/>
</dbReference>
<dbReference type="SABIO-RK" id="Q6PD10"/>
<dbReference type="BioGRID-ORCS" id="27399">
    <property type="hits" value="4 hits in 78 CRISPR screens"/>
</dbReference>
<dbReference type="ChiTaRS" id="Ip6k1">
    <property type="organism name" value="mouse"/>
</dbReference>
<dbReference type="PRO" id="PR:Q6PD10"/>
<dbReference type="Proteomes" id="UP000000589">
    <property type="component" value="Chromosome 9"/>
</dbReference>
<dbReference type="RNAct" id="Q6PD10">
    <property type="molecule type" value="protein"/>
</dbReference>
<dbReference type="Bgee" id="ENSMUSG00000032594">
    <property type="expression patterns" value="Expressed in spermatid and 260 other cell types or tissues"/>
</dbReference>
<dbReference type="ExpressionAtlas" id="Q6PD10">
    <property type="expression patterns" value="baseline and differential"/>
</dbReference>
<dbReference type="GO" id="GO:0005737">
    <property type="term" value="C:cytoplasm"/>
    <property type="evidence" value="ECO:0000314"/>
    <property type="project" value="MGI"/>
</dbReference>
<dbReference type="GO" id="GO:0005829">
    <property type="term" value="C:cytosol"/>
    <property type="evidence" value="ECO:0007669"/>
    <property type="project" value="Ensembl"/>
</dbReference>
<dbReference type="GO" id="GO:0001650">
    <property type="term" value="C:fibrillar center"/>
    <property type="evidence" value="ECO:0007669"/>
    <property type="project" value="Ensembl"/>
</dbReference>
<dbReference type="GO" id="GO:0005654">
    <property type="term" value="C:nucleoplasm"/>
    <property type="evidence" value="ECO:0007669"/>
    <property type="project" value="Ensembl"/>
</dbReference>
<dbReference type="GO" id="GO:0005634">
    <property type="term" value="C:nucleus"/>
    <property type="evidence" value="ECO:0000314"/>
    <property type="project" value="MGI"/>
</dbReference>
<dbReference type="GO" id="GO:0005524">
    <property type="term" value="F:ATP binding"/>
    <property type="evidence" value="ECO:0007669"/>
    <property type="project" value="UniProtKB-KW"/>
</dbReference>
<dbReference type="GO" id="GO:0000832">
    <property type="term" value="F:inositol hexakisphosphate 5-kinase activity"/>
    <property type="evidence" value="ECO:0007669"/>
    <property type="project" value="RHEA"/>
</dbReference>
<dbReference type="GO" id="GO:0006020">
    <property type="term" value="P:inositol metabolic process"/>
    <property type="evidence" value="ECO:0000266"/>
    <property type="project" value="MGI"/>
</dbReference>
<dbReference type="GO" id="GO:0032958">
    <property type="term" value="P:inositol phosphate biosynthetic process"/>
    <property type="evidence" value="ECO:0000266"/>
    <property type="project" value="MGI"/>
</dbReference>
<dbReference type="GO" id="GO:0120163">
    <property type="term" value="P:negative regulation of cold-induced thermogenesis"/>
    <property type="evidence" value="ECO:0000315"/>
    <property type="project" value="YuBioLab"/>
</dbReference>
<dbReference type="GO" id="GO:0046854">
    <property type="term" value="P:phosphatidylinositol phosphate biosynthetic process"/>
    <property type="evidence" value="ECO:0000250"/>
    <property type="project" value="UniProtKB"/>
</dbReference>
<dbReference type="FunFam" id="3.30.470.160:FF:000002">
    <property type="entry name" value="Kinase"/>
    <property type="match status" value="1"/>
</dbReference>
<dbReference type="Gene3D" id="3.30.470.160">
    <property type="entry name" value="Inositol polyphosphate kinase"/>
    <property type="match status" value="1"/>
</dbReference>
<dbReference type="InterPro" id="IPR005522">
    <property type="entry name" value="IPK"/>
</dbReference>
<dbReference type="InterPro" id="IPR038286">
    <property type="entry name" value="IPK_sf"/>
</dbReference>
<dbReference type="PANTHER" id="PTHR12400:SF73">
    <property type="entry name" value="INOSITOL HEXAKISPHOSPHATE KINASE 1"/>
    <property type="match status" value="1"/>
</dbReference>
<dbReference type="PANTHER" id="PTHR12400">
    <property type="entry name" value="INOSITOL POLYPHOSPHATE KINASE"/>
    <property type="match status" value="1"/>
</dbReference>
<dbReference type="Pfam" id="PF03770">
    <property type="entry name" value="IPK"/>
    <property type="match status" value="1"/>
</dbReference>
<dbReference type="SUPFAM" id="SSF56104">
    <property type="entry name" value="SAICAR synthase-like"/>
    <property type="match status" value="1"/>
</dbReference>
<comment type="function">
    <text evidence="4">Converts inositol hexakisphosphate (InsP6) to diphosphoinositol pentakisphosphate (InsP7/PP-InsP5). Converts 1,3,4,5,6-pentakisphosphate (InsP5) to PP-InsP4.</text>
</comment>
<comment type="catalytic activity">
    <reaction>
        <text>1D-myo-inositol hexakisphosphate + ATP = 5-diphospho-1D-myo-inositol 1,2,3,4,6-pentakisphosphate + ADP</text>
        <dbReference type="Rhea" id="RHEA:12793"/>
        <dbReference type="ChEBI" id="CHEBI:30616"/>
        <dbReference type="ChEBI" id="CHEBI:58130"/>
        <dbReference type="ChEBI" id="CHEBI:58628"/>
        <dbReference type="ChEBI" id="CHEBI:456216"/>
        <dbReference type="EC" id="2.7.4.21"/>
    </reaction>
</comment>
<comment type="catalytic activity">
    <reaction>
        <text>1-diphospho-1D-myo-inositol 2,3,4,5,6-pentakisphosphate + ATP + H(+) = 1,5-bis(diphospho)-1D-myo-inositol 2,3,4,6-tetrakisphosphate + ADP</text>
        <dbReference type="Rhea" id="RHEA:37467"/>
        <dbReference type="ChEBI" id="CHEBI:15378"/>
        <dbReference type="ChEBI" id="CHEBI:30616"/>
        <dbReference type="ChEBI" id="CHEBI:74946"/>
        <dbReference type="ChEBI" id="CHEBI:77983"/>
        <dbReference type="ChEBI" id="CHEBI:456216"/>
        <dbReference type="EC" id="2.7.4.21"/>
    </reaction>
</comment>
<comment type="subcellular location">
    <subcellularLocation>
        <location evidence="1">Cytoplasm</location>
    </subcellularLocation>
    <subcellularLocation>
        <location evidence="1">Nucleus</location>
    </subcellularLocation>
</comment>
<comment type="tissue specificity">
    <text evidence="4">Highly expressed in brain and testis. Detected at much lower levels in heart, kidney, liver, lung and spleen.</text>
</comment>
<comment type="similarity">
    <text evidence="5">Belongs to the inositol phosphokinase (IPK) family.</text>
</comment>
<accession>Q6PD10</accession>
<accession>Q9QXV6</accession>
<proteinExistence type="evidence at transcript level"/>
<name>IP6K1_MOUSE</name>
<evidence type="ECO:0000250" key="1"/>
<evidence type="ECO:0000250" key="2">
    <source>
        <dbReference type="UniProtKB" id="Q92551"/>
    </source>
</evidence>
<evidence type="ECO:0000256" key="3">
    <source>
        <dbReference type="SAM" id="MobiDB-lite"/>
    </source>
</evidence>
<evidence type="ECO:0000269" key="4">
    <source>
    </source>
</evidence>
<evidence type="ECO:0000305" key="5"/>
<sequence>MCVCQTMEVGQYGKNASRAGDRGVLLEPFIHQVGGHSSMMRYDDHTVCKPLISREQRFYESLPPEMKEFTPEYKGVVSVCFEGDSDGYINLVAYPYVESETVEQDDTPEREQPRRKHSRRSLHRSGSGSDHKEEKASLSFETSESSQEAKSPKVELHSHSDVPFQMLDSNSGLSSEKISYNPWSLRCHKQQLSRMRSESKDRKLYKFLLLENVVHHFKYPCVLDLKMGTRQHGDDASAEKAARQMRKCEQSTSATLGVRVCGMQVYQLDTGHYLCRNKYYGRGLSIEGFRNALYQYLHNGLDLRRDLFEPILSKLRGLKAVLERQASYRFYSSSLLVIYDGKECRSELRLKHVDMGLPEVPPPCGPSTSPSSTSLEAGPSSPPKVDVRMIDFAHSTFKGFRDDPTVHDGPDRGYVFGLENLISIMEQMRDENQ</sequence>
<gene>
    <name type="primary">Ip6k1</name>
    <name type="synonym">Ihpk1</name>
</gene>
<protein>
    <recommendedName>
        <fullName>Inositol hexakisphosphate kinase 1</fullName>
        <shortName>InsP6 kinase 1</shortName>
        <ecNumber>2.7.4.21</ecNumber>
    </recommendedName>
    <alternativeName>
        <fullName>Inositol hexaphosphate kinase 1</fullName>
    </alternativeName>
</protein>
<feature type="chain" id="PRO_0000066875" description="Inositol hexakisphosphate kinase 1">
    <location>
        <begin position="1"/>
        <end position="433"/>
    </location>
</feature>
<feature type="region of interest" description="Disordered" evidence="3">
    <location>
        <begin position="100"/>
        <end position="160"/>
    </location>
</feature>
<feature type="region of interest" description="Disordered" evidence="3">
    <location>
        <begin position="359"/>
        <end position="383"/>
    </location>
</feature>
<feature type="compositionally biased region" description="Basic residues" evidence="3">
    <location>
        <begin position="113"/>
        <end position="123"/>
    </location>
</feature>
<feature type="compositionally biased region" description="Polar residues" evidence="3">
    <location>
        <begin position="139"/>
        <end position="149"/>
    </location>
</feature>
<feature type="compositionally biased region" description="Basic and acidic residues" evidence="3">
    <location>
        <begin position="150"/>
        <end position="160"/>
    </location>
</feature>
<feature type="binding site" evidence="1">
    <location>
        <begin position="220"/>
        <end position="228"/>
    </location>
    <ligand>
        <name>substrate</name>
    </ligand>
</feature>
<feature type="modified residue" description="Phosphoserine" evidence="2">
    <location>
        <position position="151"/>
    </location>
</feature>
<feature type="sequence conflict" description="In Ref. 1; AAF15056." evidence="5" ref="1">
    <original>MR</original>
    <variation>VP</variation>
    <location>
        <begin position="428"/>
        <end position="429"/>
    </location>
</feature>
<keyword id="KW-0067">ATP-binding</keyword>
<keyword id="KW-0963">Cytoplasm</keyword>
<keyword id="KW-0418">Kinase</keyword>
<keyword id="KW-0547">Nucleotide-binding</keyword>
<keyword id="KW-0539">Nucleus</keyword>
<keyword id="KW-0597">Phosphoprotein</keyword>
<keyword id="KW-1185">Reference proteome</keyword>
<keyword id="KW-0808">Transferase</keyword>
<organism>
    <name type="scientific">Mus musculus</name>
    <name type="common">Mouse</name>
    <dbReference type="NCBI Taxonomy" id="10090"/>
    <lineage>
        <taxon>Eukaryota</taxon>
        <taxon>Metazoa</taxon>
        <taxon>Chordata</taxon>
        <taxon>Craniata</taxon>
        <taxon>Vertebrata</taxon>
        <taxon>Euteleostomi</taxon>
        <taxon>Mammalia</taxon>
        <taxon>Eutheria</taxon>
        <taxon>Euarchontoglires</taxon>
        <taxon>Glires</taxon>
        <taxon>Rodentia</taxon>
        <taxon>Myomorpha</taxon>
        <taxon>Muroidea</taxon>
        <taxon>Muridae</taxon>
        <taxon>Murinae</taxon>
        <taxon>Mus</taxon>
        <taxon>Mus</taxon>
    </lineage>
</organism>
<reference key="1">
    <citation type="journal article" date="1999" name="Curr. Biol.">
        <title>Synthesis of diphosphoinositol pentakisphosphate by a newly identified family of higher inositol polyphosphate kinases.</title>
        <authorList>
            <person name="Saiardi A."/>
            <person name="Erdjument-Bromage H."/>
            <person name="Snowman A.M."/>
            <person name="Tempst P."/>
            <person name="Snyder S.H."/>
        </authorList>
    </citation>
    <scope>NUCLEOTIDE SEQUENCE [MRNA]</scope>
    <scope>FUNCTION</scope>
    <scope>TISSUE SPECIFICITY</scope>
</reference>
<reference key="2">
    <citation type="journal article" date="2004" name="Genome Res.">
        <title>The status, quality, and expansion of the NIH full-length cDNA project: the Mammalian Gene Collection (MGC).</title>
        <authorList>
            <consortium name="The MGC Project Team"/>
        </authorList>
    </citation>
    <scope>NUCLEOTIDE SEQUENCE [LARGE SCALE MRNA]</scope>
    <source>
        <strain>C57BL/6J</strain>
        <tissue>Brain</tissue>
    </source>
</reference>